<comment type="function">
    <text>Required for nuclear membrane fusion during karyogamy.</text>
</comment>
<comment type="subcellular location">
    <subcellularLocation>
        <location>Endoplasmic reticulum membrane</location>
        <topology>Multi-pass membrane protein</topology>
    </subcellularLocation>
    <subcellularLocation>
        <location>Nucleus membrane</location>
        <topology>Multi-pass membrane protein</topology>
    </subcellularLocation>
</comment>
<comment type="induction">
    <text>By mating pheromone. Expression is directly controlled by STE12 as cells respond to mating pheromone.</text>
</comment>
<comment type="similarity">
    <text evidence="3">Belongs to the KAR5 family.</text>
</comment>
<name>KAR5_YEAS7</name>
<dbReference type="EMBL" id="AAFW02000020">
    <property type="protein sequence ID" value="EDN64454.1"/>
    <property type="molecule type" value="Genomic_DNA"/>
</dbReference>
<dbReference type="GlyCosmos" id="A6ZMC4">
    <property type="glycosylation" value="4 sites, No reported glycans"/>
</dbReference>
<dbReference type="HOGENOM" id="CLU_042075_0_0_1"/>
<dbReference type="Proteomes" id="UP000007060">
    <property type="component" value="Unassembled WGS sequence"/>
</dbReference>
<dbReference type="GO" id="GO:0005789">
    <property type="term" value="C:endoplasmic reticulum membrane"/>
    <property type="evidence" value="ECO:0007669"/>
    <property type="project" value="UniProtKB-SubCell"/>
</dbReference>
<dbReference type="GO" id="GO:0031965">
    <property type="term" value="C:nuclear membrane"/>
    <property type="evidence" value="ECO:0007669"/>
    <property type="project" value="UniProtKB-SubCell"/>
</dbReference>
<dbReference type="GO" id="GO:0000742">
    <property type="term" value="P:karyogamy involved in conjugation with cellular fusion"/>
    <property type="evidence" value="ECO:0007669"/>
    <property type="project" value="InterPro"/>
</dbReference>
<dbReference type="GO" id="GO:0048288">
    <property type="term" value="P:nuclear membrane fusion involved in karyogamy"/>
    <property type="evidence" value="ECO:0007669"/>
    <property type="project" value="InterPro"/>
</dbReference>
<dbReference type="InterPro" id="IPR007292">
    <property type="entry name" value="Nuclear_fusion_Kar5"/>
</dbReference>
<dbReference type="PANTHER" id="PTHR28012">
    <property type="entry name" value="NUCLEAR FUSION PROTEIN KAR5"/>
    <property type="match status" value="1"/>
</dbReference>
<dbReference type="PANTHER" id="PTHR28012:SF1">
    <property type="entry name" value="NUCLEAR FUSION PROTEIN KAR5"/>
    <property type="match status" value="1"/>
</dbReference>
<dbReference type="Pfam" id="PF04163">
    <property type="entry name" value="Tht1"/>
    <property type="match status" value="1"/>
</dbReference>
<reference key="1">
    <citation type="journal article" date="2007" name="Proc. Natl. Acad. Sci. U.S.A.">
        <title>Genome sequencing and comparative analysis of Saccharomyces cerevisiae strain YJM789.</title>
        <authorList>
            <person name="Wei W."/>
            <person name="McCusker J.H."/>
            <person name="Hyman R.W."/>
            <person name="Jones T."/>
            <person name="Ning Y."/>
            <person name="Cao Z."/>
            <person name="Gu Z."/>
            <person name="Bruno D."/>
            <person name="Miranda M."/>
            <person name="Nguyen M."/>
            <person name="Wilhelmy J."/>
            <person name="Komp C."/>
            <person name="Tamse R."/>
            <person name="Wang X."/>
            <person name="Jia P."/>
            <person name="Luedi P."/>
            <person name="Oefner P.J."/>
            <person name="David L."/>
            <person name="Dietrich F.S."/>
            <person name="Li Y."/>
            <person name="Davis R.W."/>
            <person name="Steinmetz L.M."/>
        </authorList>
    </citation>
    <scope>NUCLEOTIDE SEQUENCE [LARGE SCALE GENOMIC DNA]</scope>
    <source>
        <strain>YJM789</strain>
    </source>
</reference>
<accession>A6ZMC4</accession>
<feature type="signal peptide" evidence="2">
    <location>
        <begin position="1"/>
        <end position="19"/>
    </location>
</feature>
<feature type="chain" id="PRO_0000308777" description="Nuclear fusion protein KAR5">
    <location>
        <begin position="20"/>
        <end position="504"/>
    </location>
</feature>
<feature type="topological domain" description="Lumenal" evidence="1">
    <location>
        <begin position="20"/>
        <end position="452"/>
    </location>
</feature>
<feature type="transmembrane region" description="Helical" evidence="2">
    <location>
        <begin position="453"/>
        <end position="470"/>
    </location>
</feature>
<feature type="topological domain" description="Cytoplasmic" evidence="1">
    <location>
        <begin position="471"/>
        <end position="481"/>
    </location>
</feature>
<feature type="transmembrane region" description="Helical" evidence="2">
    <location>
        <begin position="482"/>
        <end position="502"/>
    </location>
</feature>
<feature type="topological domain" description="Lumenal" evidence="1">
    <location>
        <begin position="503"/>
        <end position="504"/>
    </location>
</feature>
<feature type="glycosylation site" description="N-linked (GlcNAc...) asparagine" evidence="2">
    <location>
        <position position="159"/>
    </location>
</feature>
<feature type="glycosylation site" description="N-linked (GlcNAc...) asparagine" evidence="2">
    <location>
        <position position="206"/>
    </location>
</feature>
<feature type="glycosylation site" description="N-linked (GlcNAc...) asparagine" evidence="2">
    <location>
        <position position="313"/>
    </location>
</feature>
<feature type="glycosylation site" description="N-linked (GlcNAc...) asparagine" evidence="2">
    <location>
        <position position="404"/>
    </location>
</feature>
<proteinExistence type="evidence at transcript level"/>
<organism>
    <name type="scientific">Saccharomyces cerevisiae (strain YJM789)</name>
    <name type="common">Baker's yeast</name>
    <dbReference type="NCBI Taxonomy" id="307796"/>
    <lineage>
        <taxon>Eukaryota</taxon>
        <taxon>Fungi</taxon>
        <taxon>Dikarya</taxon>
        <taxon>Ascomycota</taxon>
        <taxon>Saccharomycotina</taxon>
        <taxon>Saccharomycetes</taxon>
        <taxon>Saccharomycetales</taxon>
        <taxon>Saccharomycetaceae</taxon>
        <taxon>Saccharomyces</taxon>
    </lineage>
</organism>
<protein>
    <recommendedName>
        <fullName>Nuclear fusion protein KAR5</fullName>
    </recommendedName>
    <alternativeName>
        <fullName>Karyogamy protein 5</fullName>
    </alternativeName>
</protein>
<keyword id="KW-0256">Endoplasmic reticulum</keyword>
<keyword id="KW-0325">Glycoprotein</keyword>
<keyword id="KW-0415">Karyogamy</keyword>
<keyword id="KW-0472">Membrane</keyword>
<keyword id="KW-0539">Nucleus</keyword>
<keyword id="KW-0732">Signal</keyword>
<keyword id="KW-0812">Transmembrane</keyword>
<keyword id="KW-1133">Transmembrane helix</keyword>
<sequence length="504" mass="58382">MFAMRYVYLFAICIKFVSSSELGKINNLLQGRLIYTDNSVATNVLESKFPFLKSTCVKDALKLFLPQCIANGLESIDAETRVETAIKLSICEFQASGLGEIPENCMVDDLGSMMDCMFELESSSQWWTTYSGNYQRLSSICYENLLPFEKEQILKLFLNITELYDSFGDDVDTKLNHLMFQMEQDSQNFLDDLARMFRNYDNELRNATESNRIILENDLSFFRNKVNDVLYETSEQLEVQIIEKNSQLMNEVDTVHHIMSDLADELAKNDIKSKINDLKDDSLNNLQDLVEMSNDVKEYYSRNNKLVNTELENFSMGLKKQLGGMSKDLSESQMEAIELLQGFNSILHDSLLPSMTDEIVPEMTNFKNTLLQEWTAITSTLNGDFALWNEEIFSTFNDISEKLNGTKKKLDDIEIRVSLVHKNVMTMMRVLDFMWKTSKMIIRCGYLAVKNKYYWLLCSVVWIWSKYRTSRVNVKMIPIKRYYQWAALLLSIYLGAKTGSLIDF</sequence>
<gene>
    <name type="primary">KAR5</name>
    <name type="ORF">SCY_4236</name>
</gene>
<evidence type="ECO:0000250" key="1"/>
<evidence type="ECO:0000255" key="2"/>
<evidence type="ECO:0000305" key="3"/>